<sequence>MAFKDNAVELEERVVAINRVTKVVKGGRRLRFAALVVVGDGNGRVGFGTGKAQEVPEAIRKAVEAAKKNMIEVPMVGTTIPHEVYTNFGGAKVLLKPAVEGSGVAAGGAVRAVIELAGVADITSKSLGSNTPINIVRATVEGLKQLKRAEEVAALRGISVSDLA</sequence>
<name>RS5_STRP6</name>
<comment type="function">
    <text evidence="1">With S4 and S12 plays an important role in translational accuracy.</text>
</comment>
<comment type="function">
    <text evidence="1">Located at the back of the 30S subunit body where it stabilizes the conformation of the head with respect to the body.</text>
</comment>
<comment type="subunit">
    <text evidence="1">Part of the 30S ribosomal subunit. Contacts proteins S4 and S8.</text>
</comment>
<comment type="domain">
    <text>The N-terminal domain interacts with the head of the 30S subunit; the C-terminal domain interacts with the body and contacts protein S4. The interaction surface between S4 and S5 is involved in control of translational fidelity.</text>
</comment>
<comment type="similarity">
    <text evidence="1">Belongs to the universal ribosomal protein uS5 family.</text>
</comment>
<dbReference type="EMBL" id="CP000003">
    <property type="protein sequence ID" value="AAT86245.1"/>
    <property type="molecule type" value="Genomic_DNA"/>
</dbReference>
<dbReference type="RefSeq" id="WP_002986625.1">
    <property type="nucleotide sequence ID" value="NC_006086.1"/>
</dbReference>
<dbReference type="SMR" id="Q5XEB8"/>
<dbReference type="GeneID" id="69900043"/>
<dbReference type="KEGG" id="spa:M6_Spy0110"/>
<dbReference type="HOGENOM" id="CLU_065898_2_2_9"/>
<dbReference type="Proteomes" id="UP000001167">
    <property type="component" value="Chromosome"/>
</dbReference>
<dbReference type="GO" id="GO:0015935">
    <property type="term" value="C:small ribosomal subunit"/>
    <property type="evidence" value="ECO:0007669"/>
    <property type="project" value="InterPro"/>
</dbReference>
<dbReference type="GO" id="GO:0019843">
    <property type="term" value="F:rRNA binding"/>
    <property type="evidence" value="ECO:0007669"/>
    <property type="project" value="UniProtKB-UniRule"/>
</dbReference>
<dbReference type="GO" id="GO:0003735">
    <property type="term" value="F:structural constituent of ribosome"/>
    <property type="evidence" value="ECO:0007669"/>
    <property type="project" value="InterPro"/>
</dbReference>
<dbReference type="GO" id="GO:0006412">
    <property type="term" value="P:translation"/>
    <property type="evidence" value="ECO:0007669"/>
    <property type="project" value="UniProtKB-UniRule"/>
</dbReference>
<dbReference type="FunFam" id="3.30.160.20:FF:000001">
    <property type="entry name" value="30S ribosomal protein S5"/>
    <property type="match status" value="1"/>
</dbReference>
<dbReference type="FunFam" id="3.30.230.10:FF:000002">
    <property type="entry name" value="30S ribosomal protein S5"/>
    <property type="match status" value="1"/>
</dbReference>
<dbReference type="Gene3D" id="3.30.160.20">
    <property type="match status" value="1"/>
</dbReference>
<dbReference type="Gene3D" id="3.30.230.10">
    <property type="match status" value="1"/>
</dbReference>
<dbReference type="HAMAP" id="MF_01307_B">
    <property type="entry name" value="Ribosomal_uS5_B"/>
    <property type="match status" value="1"/>
</dbReference>
<dbReference type="InterPro" id="IPR020568">
    <property type="entry name" value="Ribosomal_Su5_D2-typ_SF"/>
</dbReference>
<dbReference type="InterPro" id="IPR000851">
    <property type="entry name" value="Ribosomal_uS5"/>
</dbReference>
<dbReference type="InterPro" id="IPR005712">
    <property type="entry name" value="Ribosomal_uS5_bac-type"/>
</dbReference>
<dbReference type="InterPro" id="IPR005324">
    <property type="entry name" value="Ribosomal_uS5_C"/>
</dbReference>
<dbReference type="InterPro" id="IPR013810">
    <property type="entry name" value="Ribosomal_uS5_N"/>
</dbReference>
<dbReference type="InterPro" id="IPR018192">
    <property type="entry name" value="Ribosomal_uS5_N_CS"/>
</dbReference>
<dbReference type="InterPro" id="IPR014721">
    <property type="entry name" value="Ribsml_uS5_D2-typ_fold_subgr"/>
</dbReference>
<dbReference type="NCBIfam" id="TIGR01021">
    <property type="entry name" value="rpsE_bact"/>
    <property type="match status" value="1"/>
</dbReference>
<dbReference type="PANTHER" id="PTHR48277">
    <property type="entry name" value="MITOCHONDRIAL RIBOSOMAL PROTEIN S5"/>
    <property type="match status" value="1"/>
</dbReference>
<dbReference type="PANTHER" id="PTHR48277:SF1">
    <property type="entry name" value="MITOCHONDRIAL RIBOSOMAL PROTEIN S5"/>
    <property type="match status" value="1"/>
</dbReference>
<dbReference type="Pfam" id="PF00333">
    <property type="entry name" value="Ribosomal_S5"/>
    <property type="match status" value="1"/>
</dbReference>
<dbReference type="Pfam" id="PF03719">
    <property type="entry name" value="Ribosomal_S5_C"/>
    <property type="match status" value="1"/>
</dbReference>
<dbReference type="SUPFAM" id="SSF54768">
    <property type="entry name" value="dsRNA-binding domain-like"/>
    <property type="match status" value="1"/>
</dbReference>
<dbReference type="SUPFAM" id="SSF54211">
    <property type="entry name" value="Ribosomal protein S5 domain 2-like"/>
    <property type="match status" value="1"/>
</dbReference>
<dbReference type="PROSITE" id="PS00585">
    <property type="entry name" value="RIBOSOMAL_S5"/>
    <property type="match status" value="1"/>
</dbReference>
<dbReference type="PROSITE" id="PS50881">
    <property type="entry name" value="S5_DSRBD"/>
    <property type="match status" value="1"/>
</dbReference>
<protein>
    <recommendedName>
        <fullName evidence="1">Small ribosomal subunit protein uS5</fullName>
    </recommendedName>
    <alternativeName>
        <fullName evidence="2">30S ribosomal protein S5</fullName>
    </alternativeName>
</protein>
<gene>
    <name evidence="1" type="primary">rpsE</name>
    <name type="ordered locus">M6_Spy0110</name>
</gene>
<reference key="1">
    <citation type="journal article" date="2004" name="J. Infect. Dis.">
        <title>Progress toward characterization of the group A Streptococcus metagenome: complete genome sequence of a macrolide-resistant serotype M6 strain.</title>
        <authorList>
            <person name="Banks D.J."/>
            <person name="Porcella S.F."/>
            <person name="Barbian K.D."/>
            <person name="Beres S.B."/>
            <person name="Philips L.E."/>
            <person name="Voyich J.M."/>
            <person name="DeLeo F.R."/>
            <person name="Martin J.M."/>
            <person name="Somerville G.A."/>
            <person name="Musser J.M."/>
        </authorList>
    </citation>
    <scope>NUCLEOTIDE SEQUENCE [LARGE SCALE GENOMIC DNA]</scope>
    <source>
        <strain>ATCC BAA-946 / MGAS10394</strain>
    </source>
</reference>
<evidence type="ECO:0000255" key="1">
    <source>
        <dbReference type="HAMAP-Rule" id="MF_01307"/>
    </source>
</evidence>
<evidence type="ECO:0000305" key="2"/>
<feature type="chain" id="PRO_0000131610" description="Small ribosomal subunit protein uS5">
    <location>
        <begin position="1"/>
        <end position="164"/>
    </location>
</feature>
<feature type="domain" description="S5 DRBM" evidence="1">
    <location>
        <begin position="10"/>
        <end position="73"/>
    </location>
</feature>
<organism>
    <name type="scientific">Streptococcus pyogenes serotype M6 (strain ATCC BAA-946 / MGAS10394)</name>
    <dbReference type="NCBI Taxonomy" id="286636"/>
    <lineage>
        <taxon>Bacteria</taxon>
        <taxon>Bacillati</taxon>
        <taxon>Bacillota</taxon>
        <taxon>Bacilli</taxon>
        <taxon>Lactobacillales</taxon>
        <taxon>Streptococcaceae</taxon>
        <taxon>Streptococcus</taxon>
    </lineage>
</organism>
<proteinExistence type="inferred from homology"/>
<keyword id="KW-0687">Ribonucleoprotein</keyword>
<keyword id="KW-0689">Ribosomal protein</keyword>
<keyword id="KW-0694">RNA-binding</keyword>
<keyword id="KW-0699">rRNA-binding</keyword>
<accession>Q5XEB8</accession>